<organism>
    <name type="scientific">Arabidopsis thaliana</name>
    <name type="common">Mouse-ear cress</name>
    <dbReference type="NCBI Taxonomy" id="3702"/>
    <lineage>
        <taxon>Eukaryota</taxon>
        <taxon>Viridiplantae</taxon>
        <taxon>Streptophyta</taxon>
        <taxon>Embryophyta</taxon>
        <taxon>Tracheophyta</taxon>
        <taxon>Spermatophyta</taxon>
        <taxon>Magnoliopsida</taxon>
        <taxon>eudicotyledons</taxon>
        <taxon>Gunneridae</taxon>
        <taxon>Pentapetalae</taxon>
        <taxon>rosids</taxon>
        <taxon>malvids</taxon>
        <taxon>Brassicales</taxon>
        <taxon>Brassicaceae</taxon>
        <taxon>Camelineae</taxon>
        <taxon>Arabidopsis</taxon>
    </lineage>
</organism>
<proteinExistence type="inferred from homology"/>
<dbReference type="EMBL" id="AL161514">
    <property type="protein sequence ID" value="CAB78031.1"/>
    <property type="molecule type" value="Genomic_DNA"/>
</dbReference>
<dbReference type="EMBL" id="CP002687">
    <property type="protein sequence ID" value="AEE82719.1"/>
    <property type="molecule type" value="Genomic_DNA"/>
</dbReference>
<dbReference type="PIR" id="G85091">
    <property type="entry name" value="G85091"/>
</dbReference>
<dbReference type="RefSeq" id="NP_192646.1">
    <property type="nucleotide sequence ID" value="NM_116976.1"/>
</dbReference>
<dbReference type="SMR" id="Q9M0S0"/>
<dbReference type="FunCoup" id="Q9M0S0">
    <property type="interactions" value="379"/>
</dbReference>
<dbReference type="STRING" id="3702.Q9M0S0"/>
<dbReference type="PaxDb" id="3702-AT4G09070.1"/>
<dbReference type="EnsemblPlants" id="AT4G09070.1">
    <property type="protein sequence ID" value="AT4G09070.1"/>
    <property type="gene ID" value="AT4G09070"/>
</dbReference>
<dbReference type="GeneID" id="826485"/>
<dbReference type="Gramene" id="AT4G09070.1">
    <property type="protein sequence ID" value="AT4G09070.1"/>
    <property type="gene ID" value="AT4G09070"/>
</dbReference>
<dbReference type="KEGG" id="ath:AT4G09070"/>
<dbReference type="Araport" id="AT4G09070"/>
<dbReference type="TAIR" id="AT4G09070">
    <property type="gene designation" value="MED20B"/>
</dbReference>
<dbReference type="eggNOG" id="KOG1383">
    <property type="taxonomic scope" value="Eukaryota"/>
</dbReference>
<dbReference type="HOGENOM" id="CLU_080552_0_0_1"/>
<dbReference type="InParanoid" id="Q9M0S0"/>
<dbReference type="OMA" id="QHTAVGY"/>
<dbReference type="OrthoDB" id="1854899at2759"/>
<dbReference type="PhylomeDB" id="Q9M0S0"/>
<dbReference type="PRO" id="PR:Q9M0S0"/>
<dbReference type="Proteomes" id="UP000006548">
    <property type="component" value="Chromosome 4"/>
</dbReference>
<dbReference type="ExpressionAtlas" id="Q9M0S0">
    <property type="expression patterns" value="baseline"/>
</dbReference>
<dbReference type="GO" id="GO:0016592">
    <property type="term" value="C:mediator complex"/>
    <property type="evidence" value="ECO:0007669"/>
    <property type="project" value="InterPro"/>
</dbReference>
<dbReference type="GO" id="GO:0003712">
    <property type="term" value="F:transcription coregulator activity"/>
    <property type="evidence" value="ECO:0007669"/>
    <property type="project" value="InterPro"/>
</dbReference>
<dbReference type="GO" id="GO:0006357">
    <property type="term" value="P:regulation of transcription by RNA polymerase II"/>
    <property type="evidence" value="ECO:0007669"/>
    <property type="project" value="InterPro"/>
</dbReference>
<dbReference type="InterPro" id="IPR013921">
    <property type="entry name" value="Mediator_Med20"/>
</dbReference>
<dbReference type="PANTHER" id="PTHR12465:SF0">
    <property type="entry name" value="MEDIATOR OF RNA POLYMERASE II TRANSCRIPTION SUBUNIT 20"/>
    <property type="match status" value="1"/>
</dbReference>
<dbReference type="PANTHER" id="PTHR12465">
    <property type="entry name" value="UBIQUITIN SPECIFIC PROTEASE HOMOLOG 49"/>
    <property type="match status" value="1"/>
</dbReference>
<dbReference type="Pfam" id="PF08612">
    <property type="entry name" value="Med20"/>
    <property type="match status" value="1"/>
</dbReference>
<keyword id="KW-0539">Nucleus</keyword>
<keyword id="KW-1185">Reference proteome</keyword>
<keyword id="KW-0804">Transcription</keyword>
<keyword id="KW-0805">Transcription regulation</keyword>
<gene>
    <name type="primary">MED20B</name>
    <name type="synonym">MED20_2</name>
    <name type="ordered locus">At4g09070</name>
    <name type="ORF">F23J3.100</name>
</gene>
<accession>Q9M0S0</accession>
<comment type="function">
    <text evidence="1">Component of the Mediator complex, a coactivator involved in the regulated transcription of nearly all RNA polymerase II-dependent genes. Mediator functions as a bridge to convey information from gene-specific regulatory proteins to the basal RNA polymerase II transcription machinery. The Mediator complex, having a compact conformation in its free form, is recruited to promoters by direct interactions with regulatory proteins and serves for the assembly of a functional preinitiation complex with RNA polymerase II and the general transcription factors (By similarity).</text>
</comment>
<comment type="subunit">
    <text evidence="2">Component of the Mediator complex.</text>
</comment>
<comment type="subcellular location">
    <subcellularLocation>
        <location evidence="2">Nucleus</location>
    </subcellularLocation>
</comment>
<comment type="similarity">
    <text evidence="2">Belongs to the Mediator complex subunit 20 family.</text>
</comment>
<name>MD20B_ARATH</name>
<sequence>MPVKWLLHWQPNQGSTFSSQILNEVTQSIESLNGVKEGTWKATLNYYKPMLQDQANQAEFPREFVGISLPEEPDKYYFVIRSQRIVVEADSSIQMIMESLQSYKCKLSFYFEGLEYQLGDFRLRVGKVVPTHAETIRGVVMEVEYLPISSMGMAKKLMEEFLEIWQEAMSKRSLPGKFVNKELNFEKFGLGDNYTPQHTAVGYAFFMANLMAAIQAGRG</sequence>
<evidence type="ECO:0000250" key="1"/>
<evidence type="ECO:0000305" key="2"/>
<protein>
    <recommendedName>
        <fullName>Mediator of RNA polymerase II transcription subunit 20b</fullName>
    </recommendedName>
</protein>
<feature type="chain" id="PRO_0000418120" description="Mediator of RNA polymerase II transcription subunit 20b">
    <location>
        <begin position="1"/>
        <end position="219"/>
    </location>
</feature>
<reference key="1">
    <citation type="journal article" date="1999" name="Nature">
        <title>Sequence and analysis of chromosome 4 of the plant Arabidopsis thaliana.</title>
        <authorList>
            <person name="Mayer K.F.X."/>
            <person name="Schueller C."/>
            <person name="Wambutt R."/>
            <person name="Murphy G."/>
            <person name="Volckaert G."/>
            <person name="Pohl T."/>
            <person name="Duesterhoeft A."/>
            <person name="Stiekema W."/>
            <person name="Entian K.-D."/>
            <person name="Terryn N."/>
            <person name="Harris B."/>
            <person name="Ansorge W."/>
            <person name="Brandt P."/>
            <person name="Grivell L.A."/>
            <person name="Rieger M."/>
            <person name="Weichselgartner M."/>
            <person name="de Simone V."/>
            <person name="Obermaier B."/>
            <person name="Mache R."/>
            <person name="Mueller M."/>
            <person name="Kreis M."/>
            <person name="Delseny M."/>
            <person name="Puigdomenech P."/>
            <person name="Watson M."/>
            <person name="Schmidtheini T."/>
            <person name="Reichert B."/>
            <person name="Portetelle D."/>
            <person name="Perez-Alonso M."/>
            <person name="Boutry M."/>
            <person name="Bancroft I."/>
            <person name="Vos P."/>
            <person name="Hoheisel J."/>
            <person name="Zimmermann W."/>
            <person name="Wedler H."/>
            <person name="Ridley P."/>
            <person name="Langham S.-A."/>
            <person name="McCullagh B."/>
            <person name="Bilham L."/>
            <person name="Robben J."/>
            <person name="van der Schueren J."/>
            <person name="Grymonprez B."/>
            <person name="Chuang Y.-J."/>
            <person name="Vandenbussche F."/>
            <person name="Braeken M."/>
            <person name="Weltjens I."/>
            <person name="Voet M."/>
            <person name="Bastiaens I."/>
            <person name="Aert R."/>
            <person name="Defoor E."/>
            <person name="Weitzenegger T."/>
            <person name="Bothe G."/>
            <person name="Ramsperger U."/>
            <person name="Hilbert H."/>
            <person name="Braun M."/>
            <person name="Holzer E."/>
            <person name="Brandt A."/>
            <person name="Peters S."/>
            <person name="van Staveren M."/>
            <person name="Dirkse W."/>
            <person name="Mooijman P."/>
            <person name="Klein Lankhorst R."/>
            <person name="Rose M."/>
            <person name="Hauf J."/>
            <person name="Koetter P."/>
            <person name="Berneiser S."/>
            <person name="Hempel S."/>
            <person name="Feldpausch M."/>
            <person name="Lamberth S."/>
            <person name="Van den Daele H."/>
            <person name="De Keyser A."/>
            <person name="Buysshaert C."/>
            <person name="Gielen J."/>
            <person name="Villarroel R."/>
            <person name="De Clercq R."/>
            <person name="van Montagu M."/>
            <person name="Rogers J."/>
            <person name="Cronin A."/>
            <person name="Quail M.A."/>
            <person name="Bray-Allen S."/>
            <person name="Clark L."/>
            <person name="Doggett J."/>
            <person name="Hall S."/>
            <person name="Kay M."/>
            <person name="Lennard N."/>
            <person name="McLay K."/>
            <person name="Mayes R."/>
            <person name="Pettett A."/>
            <person name="Rajandream M.A."/>
            <person name="Lyne M."/>
            <person name="Benes V."/>
            <person name="Rechmann S."/>
            <person name="Borkova D."/>
            <person name="Bloecker H."/>
            <person name="Scharfe M."/>
            <person name="Grimm M."/>
            <person name="Loehnert T.-H."/>
            <person name="Dose S."/>
            <person name="de Haan M."/>
            <person name="Maarse A.C."/>
            <person name="Schaefer M."/>
            <person name="Mueller-Auer S."/>
            <person name="Gabel C."/>
            <person name="Fuchs M."/>
            <person name="Fartmann B."/>
            <person name="Granderath K."/>
            <person name="Dauner D."/>
            <person name="Herzl A."/>
            <person name="Neumann S."/>
            <person name="Argiriou A."/>
            <person name="Vitale D."/>
            <person name="Liguori R."/>
            <person name="Piravandi E."/>
            <person name="Massenet O."/>
            <person name="Quigley F."/>
            <person name="Clabauld G."/>
            <person name="Muendlein A."/>
            <person name="Felber R."/>
            <person name="Schnabl S."/>
            <person name="Hiller R."/>
            <person name="Schmidt W."/>
            <person name="Lecharny A."/>
            <person name="Aubourg S."/>
            <person name="Chefdor F."/>
            <person name="Cooke R."/>
            <person name="Berger C."/>
            <person name="Monfort A."/>
            <person name="Casacuberta E."/>
            <person name="Gibbons T."/>
            <person name="Weber N."/>
            <person name="Vandenbol M."/>
            <person name="Bargues M."/>
            <person name="Terol J."/>
            <person name="Torres A."/>
            <person name="Perez-Perez A."/>
            <person name="Purnelle B."/>
            <person name="Bent E."/>
            <person name="Johnson S."/>
            <person name="Tacon D."/>
            <person name="Jesse T."/>
            <person name="Heijnen L."/>
            <person name="Schwarz S."/>
            <person name="Scholler P."/>
            <person name="Heber S."/>
            <person name="Francs P."/>
            <person name="Bielke C."/>
            <person name="Frishman D."/>
            <person name="Haase D."/>
            <person name="Lemcke K."/>
            <person name="Mewes H.-W."/>
            <person name="Stocker S."/>
            <person name="Zaccaria P."/>
            <person name="Bevan M."/>
            <person name="Wilson R.K."/>
            <person name="de la Bastide M."/>
            <person name="Habermann K."/>
            <person name="Parnell L."/>
            <person name="Dedhia N."/>
            <person name="Gnoj L."/>
            <person name="Schutz K."/>
            <person name="Huang E."/>
            <person name="Spiegel L."/>
            <person name="Sekhon M."/>
            <person name="Murray J."/>
            <person name="Sheet P."/>
            <person name="Cordes M."/>
            <person name="Abu-Threideh J."/>
            <person name="Stoneking T."/>
            <person name="Kalicki J."/>
            <person name="Graves T."/>
            <person name="Harmon G."/>
            <person name="Edwards J."/>
            <person name="Latreille P."/>
            <person name="Courtney L."/>
            <person name="Cloud J."/>
            <person name="Abbott A."/>
            <person name="Scott K."/>
            <person name="Johnson D."/>
            <person name="Minx P."/>
            <person name="Bentley D."/>
            <person name="Fulton B."/>
            <person name="Miller N."/>
            <person name="Greco T."/>
            <person name="Kemp K."/>
            <person name="Kramer J."/>
            <person name="Fulton L."/>
            <person name="Mardis E."/>
            <person name="Dante M."/>
            <person name="Pepin K."/>
            <person name="Hillier L.W."/>
            <person name="Nelson J."/>
            <person name="Spieth J."/>
            <person name="Ryan E."/>
            <person name="Andrews S."/>
            <person name="Geisel C."/>
            <person name="Layman D."/>
            <person name="Du H."/>
            <person name="Ali J."/>
            <person name="Berghoff A."/>
            <person name="Jones K."/>
            <person name="Drone K."/>
            <person name="Cotton M."/>
            <person name="Joshu C."/>
            <person name="Antonoiu B."/>
            <person name="Zidanic M."/>
            <person name="Strong C."/>
            <person name="Sun H."/>
            <person name="Lamar B."/>
            <person name="Yordan C."/>
            <person name="Ma P."/>
            <person name="Zhong J."/>
            <person name="Preston R."/>
            <person name="Vil D."/>
            <person name="Shekher M."/>
            <person name="Matero A."/>
            <person name="Shah R."/>
            <person name="Swaby I.K."/>
            <person name="O'Shaughnessy A."/>
            <person name="Rodriguez M."/>
            <person name="Hoffman J."/>
            <person name="Till S."/>
            <person name="Granat S."/>
            <person name="Shohdy N."/>
            <person name="Hasegawa A."/>
            <person name="Hameed A."/>
            <person name="Lodhi M."/>
            <person name="Johnson A."/>
            <person name="Chen E."/>
            <person name="Marra M.A."/>
            <person name="Martienssen R."/>
            <person name="McCombie W.R."/>
        </authorList>
    </citation>
    <scope>NUCLEOTIDE SEQUENCE [LARGE SCALE GENOMIC DNA]</scope>
    <source>
        <strain>cv. Columbia</strain>
    </source>
</reference>
<reference key="2">
    <citation type="journal article" date="2017" name="Plant J.">
        <title>Araport11: a complete reannotation of the Arabidopsis thaliana reference genome.</title>
        <authorList>
            <person name="Cheng C.Y."/>
            <person name="Krishnakumar V."/>
            <person name="Chan A.P."/>
            <person name="Thibaud-Nissen F."/>
            <person name="Schobel S."/>
            <person name="Town C.D."/>
        </authorList>
    </citation>
    <scope>GENOME REANNOTATION</scope>
    <source>
        <strain>cv. Columbia</strain>
    </source>
</reference>
<reference key="3">
    <citation type="journal article" date="2011" name="Plant Physiol.">
        <title>The Mediator complex in plants: structure, phylogeny, and expression profiling of representative genes in a dicot (Arabidopsis) and a monocot (rice) during reproduction and abiotic stress.</title>
        <authorList>
            <person name="Mathur S."/>
            <person name="Vyas S."/>
            <person name="Kapoor S."/>
            <person name="Tyagi A.K."/>
        </authorList>
    </citation>
    <scope>IDENTIFICATION</scope>
    <scope>NOMENCLATURE</scope>
</reference>